<name>DNLJ_ECO5E</name>
<accession>B5YZV8</accession>
<reference key="1">
    <citation type="journal article" date="2011" name="Proc. Natl. Acad. Sci. U.S.A.">
        <title>Genomic anatomy of Escherichia coli O157:H7 outbreaks.</title>
        <authorList>
            <person name="Eppinger M."/>
            <person name="Mammel M.K."/>
            <person name="Leclerc J.E."/>
            <person name="Ravel J."/>
            <person name="Cebula T.A."/>
        </authorList>
    </citation>
    <scope>NUCLEOTIDE SEQUENCE [LARGE SCALE GENOMIC DNA]</scope>
    <source>
        <strain>EC4115 / EHEC</strain>
    </source>
</reference>
<dbReference type="EC" id="6.5.1.2" evidence="1"/>
<dbReference type="EMBL" id="CP001164">
    <property type="protein sequence ID" value="ACI38262.1"/>
    <property type="molecule type" value="Genomic_DNA"/>
</dbReference>
<dbReference type="RefSeq" id="WP_000443697.1">
    <property type="nucleotide sequence ID" value="NC_011353.1"/>
</dbReference>
<dbReference type="SMR" id="B5YZV8"/>
<dbReference type="KEGG" id="ecf:ECH74115_3642"/>
<dbReference type="HOGENOM" id="CLU_007764_2_1_6"/>
<dbReference type="GO" id="GO:0005829">
    <property type="term" value="C:cytosol"/>
    <property type="evidence" value="ECO:0007669"/>
    <property type="project" value="TreeGrafter"/>
</dbReference>
<dbReference type="GO" id="GO:0003677">
    <property type="term" value="F:DNA binding"/>
    <property type="evidence" value="ECO:0007669"/>
    <property type="project" value="InterPro"/>
</dbReference>
<dbReference type="GO" id="GO:0003911">
    <property type="term" value="F:DNA ligase (NAD+) activity"/>
    <property type="evidence" value="ECO:0007669"/>
    <property type="project" value="UniProtKB-UniRule"/>
</dbReference>
<dbReference type="GO" id="GO:0046872">
    <property type="term" value="F:metal ion binding"/>
    <property type="evidence" value="ECO:0007669"/>
    <property type="project" value="UniProtKB-KW"/>
</dbReference>
<dbReference type="GO" id="GO:0006281">
    <property type="term" value="P:DNA repair"/>
    <property type="evidence" value="ECO:0007669"/>
    <property type="project" value="UniProtKB-KW"/>
</dbReference>
<dbReference type="GO" id="GO:0006260">
    <property type="term" value="P:DNA replication"/>
    <property type="evidence" value="ECO:0007669"/>
    <property type="project" value="UniProtKB-KW"/>
</dbReference>
<dbReference type="CDD" id="cd17748">
    <property type="entry name" value="BRCT_DNA_ligase_like"/>
    <property type="match status" value="1"/>
</dbReference>
<dbReference type="CDD" id="cd00114">
    <property type="entry name" value="LIGANc"/>
    <property type="match status" value="1"/>
</dbReference>
<dbReference type="FunFam" id="1.10.150.20:FF:000006">
    <property type="entry name" value="DNA ligase"/>
    <property type="match status" value="1"/>
</dbReference>
<dbReference type="FunFam" id="1.10.150.20:FF:000007">
    <property type="entry name" value="DNA ligase"/>
    <property type="match status" value="1"/>
</dbReference>
<dbReference type="FunFam" id="1.10.287.610:FF:000002">
    <property type="entry name" value="DNA ligase"/>
    <property type="match status" value="1"/>
</dbReference>
<dbReference type="FunFam" id="2.40.50.140:FF:000012">
    <property type="entry name" value="DNA ligase"/>
    <property type="match status" value="1"/>
</dbReference>
<dbReference type="FunFam" id="3.30.470.30:FF:000001">
    <property type="entry name" value="DNA ligase"/>
    <property type="match status" value="1"/>
</dbReference>
<dbReference type="FunFam" id="3.40.50.10190:FF:000004">
    <property type="entry name" value="DNA ligase"/>
    <property type="match status" value="1"/>
</dbReference>
<dbReference type="FunFam" id="6.20.10.30:FF:000001">
    <property type="entry name" value="DNA ligase"/>
    <property type="match status" value="1"/>
</dbReference>
<dbReference type="Gene3D" id="6.20.10.30">
    <property type="match status" value="1"/>
</dbReference>
<dbReference type="Gene3D" id="1.10.150.20">
    <property type="entry name" value="5' to 3' exonuclease, C-terminal subdomain"/>
    <property type="match status" value="2"/>
</dbReference>
<dbReference type="Gene3D" id="3.40.50.10190">
    <property type="entry name" value="BRCT domain"/>
    <property type="match status" value="1"/>
</dbReference>
<dbReference type="Gene3D" id="3.30.470.30">
    <property type="entry name" value="DNA ligase/mRNA capping enzyme"/>
    <property type="match status" value="1"/>
</dbReference>
<dbReference type="Gene3D" id="1.10.287.610">
    <property type="entry name" value="Helix hairpin bin"/>
    <property type="match status" value="1"/>
</dbReference>
<dbReference type="Gene3D" id="2.40.50.140">
    <property type="entry name" value="Nucleic acid-binding proteins"/>
    <property type="match status" value="1"/>
</dbReference>
<dbReference type="HAMAP" id="MF_01588">
    <property type="entry name" value="DNA_ligase_A"/>
    <property type="match status" value="1"/>
</dbReference>
<dbReference type="InterPro" id="IPR001357">
    <property type="entry name" value="BRCT_dom"/>
</dbReference>
<dbReference type="InterPro" id="IPR036420">
    <property type="entry name" value="BRCT_dom_sf"/>
</dbReference>
<dbReference type="InterPro" id="IPR041663">
    <property type="entry name" value="DisA/LigA_HHH"/>
</dbReference>
<dbReference type="InterPro" id="IPR001679">
    <property type="entry name" value="DNA_ligase"/>
</dbReference>
<dbReference type="InterPro" id="IPR018239">
    <property type="entry name" value="DNA_ligase_AS"/>
</dbReference>
<dbReference type="InterPro" id="IPR033136">
    <property type="entry name" value="DNA_ligase_CS"/>
</dbReference>
<dbReference type="InterPro" id="IPR013839">
    <property type="entry name" value="DNAligase_adenylation"/>
</dbReference>
<dbReference type="InterPro" id="IPR013840">
    <property type="entry name" value="DNAligase_N"/>
</dbReference>
<dbReference type="InterPro" id="IPR003583">
    <property type="entry name" value="Hlx-hairpin-Hlx_DNA-bd_motif"/>
</dbReference>
<dbReference type="InterPro" id="IPR012340">
    <property type="entry name" value="NA-bd_OB-fold"/>
</dbReference>
<dbReference type="InterPro" id="IPR004150">
    <property type="entry name" value="NAD_DNA_ligase_OB"/>
</dbReference>
<dbReference type="InterPro" id="IPR010994">
    <property type="entry name" value="RuvA_2-like"/>
</dbReference>
<dbReference type="InterPro" id="IPR004149">
    <property type="entry name" value="Znf_DNAligase_C4"/>
</dbReference>
<dbReference type="NCBIfam" id="TIGR00575">
    <property type="entry name" value="dnlj"/>
    <property type="match status" value="1"/>
</dbReference>
<dbReference type="NCBIfam" id="NF005932">
    <property type="entry name" value="PRK07956.1"/>
    <property type="match status" value="1"/>
</dbReference>
<dbReference type="PANTHER" id="PTHR23389">
    <property type="entry name" value="CHROMOSOME TRANSMISSION FIDELITY FACTOR 18"/>
    <property type="match status" value="1"/>
</dbReference>
<dbReference type="PANTHER" id="PTHR23389:SF9">
    <property type="entry name" value="DNA LIGASE"/>
    <property type="match status" value="1"/>
</dbReference>
<dbReference type="Pfam" id="PF00533">
    <property type="entry name" value="BRCT"/>
    <property type="match status" value="1"/>
</dbReference>
<dbReference type="Pfam" id="PF01653">
    <property type="entry name" value="DNA_ligase_aden"/>
    <property type="match status" value="1"/>
</dbReference>
<dbReference type="Pfam" id="PF03120">
    <property type="entry name" value="DNA_ligase_OB"/>
    <property type="match status" value="1"/>
</dbReference>
<dbReference type="Pfam" id="PF03119">
    <property type="entry name" value="DNA_ligase_ZBD"/>
    <property type="match status" value="1"/>
</dbReference>
<dbReference type="Pfam" id="PF12826">
    <property type="entry name" value="HHH_2"/>
    <property type="match status" value="1"/>
</dbReference>
<dbReference type="Pfam" id="PF14520">
    <property type="entry name" value="HHH_5"/>
    <property type="match status" value="1"/>
</dbReference>
<dbReference type="Pfam" id="PF22745">
    <property type="entry name" value="Nlig-Ia"/>
    <property type="match status" value="1"/>
</dbReference>
<dbReference type="PIRSF" id="PIRSF001604">
    <property type="entry name" value="LigA"/>
    <property type="match status" value="1"/>
</dbReference>
<dbReference type="SMART" id="SM00292">
    <property type="entry name" value="BRCT"/>
    <property type="match status" value="1"/>
</dbReference>
<dbReference type="SMART" id="SM00278">
    <property type="entry name" value="HhH1"/>
    <property type="match status" value="4"/>
</dbReference>
<dbReference type="SMART" id="SM00532">
    <property type="entry name" value="LIGANc"/>
    <property type="match status" value="1"/>
</dbReference>
<dbReference type="SUPFAM" id="SSF52113">
    <property type="entry name" value="BRCT domain"/>
    <property type="match status" value="1"/>
</dbReference>
<dbReference type="SUPFAM" id="SSF56091">
    <property type="entry name" value="DNA ligase/mRNA capping enzyme, catalytic domain"/>
    <property type="match status" value="1"/>
</dbReference>
<dbReference type="SUPFAM" id="SSF50249">
    <property type="entry name" value="Nucleic acid-binding proteins"/>
    <property type="match status" value="1"/>
</dbReference>
<dbReference type="SUPFAM" id="SSF47781">
    <property type="entry name" value="RuvA domain 2-like"/>
    <property type="match status" value="1"/>
</dbReference>
<dbReference type="PROSITE" id="PS50172">
    <property type="entry name" value="BRCT"/>
    <property type="match status" value="1"/>
</dbReference>
<dbReference type="PROSITE" id="PS01055">
    <property type="entry name" value="DNA_LIGASE_N1"/>
    <property type="match status" value="1"/>
</dbReference>
<dbReference type="PROSITE" id="PS01056">
    <property type="entry name" value="DNA_LIGASE_N2"/>
    <property type="match status" value="1"/>
</dbReference>
<protein>
    <recommendedName>
        <fullName evidence="1">DNA ligase</fullName>
        <ecNumber evidence="1">6.5.1.2</ecNumber>
    </recommendedName>
    <alternativeName>
        <fullName evidence="1">Polydeoxyribonucleotide synthase [NAD(+)]</fullName>
    </alternativeName>
</protein>
<evidence type="ECO:0000255" key="1">
    <source>
        <dbReference type="HAMAP-Rule" id="MF_01588"/>
    </source>
</evidence>
<keyword id="KW-0227">DNA damage</keyword>
<keyword id="KW-0234">DNA repair</keyword>
<keyword id="KW-0235">DNA replication</keyword>
<keyword id="KW-0436">Ligase</keyword>
<keyword id="KW-0460">Magnesium</keyword>
<keyword id="KW-0464">Manganese</keyword>
<keyword id="KW-0479">Metal-binding</keyword>
<keyword id="KW-0520">NAD</keyword>
<keyword id="KW-0862">Zinc</keyword>
<proteinExistence type="inferred from homology"/>
<feature type="chain" id="PRO_0000380371" description="DNA ligase">
    <location>
        <begin position="1"/>
        <end position="671"/>
    </location>
</feature>
<feature type="domain" description="BRCT" evidence="1">
    <location>
        <begin position="593"/>
        <end position="671"/>
    </location>
</feature>
<feature type="active site" description="N6-AMP-lysine intermediate" evidence="1">
    <location>
        <position position="115"/>
    </location>
</feature>
<feature type="binding site" evidence="1">
    <location>
        <begin position="32"/>
        <end position="36"/>
    </location>
    <ligand>
        <name>NAD(+)</name>
        <dbReference type="ChEBI" id="CHEBI:57540"/>
    </ligand>
</feature>
<feature type="binding site" evidence="1">
    <location>
        <begin position="81"/>
        <end position="82"/>
    </location>
    <ligand>
        <name>NAD(+)</name>
        <dbReference type="ChEBI" id="CHEBI:57540"/>
    </ligand>
</feature>
<feature type="binding site" evidence="1">
    <location>
        <position position="113"/>
    </location>
    <ligand>
        <name>NAD(+)</name>
        <dbReference type="ChEBI" id="CHEBI:57540"/>
    </ligand>
</feature>
<feature type="binding site" evidence="1">
    <location>
        <position position="136"/>
    </location>
    <ligand>
        <name>NAD(+)</name>
        <dbReference type="ChEBI" id="CHEBI:57540"/>
    </ligand>
</feature>
<feature type="binding site" evidence="1">
    <location>
        <position position="173"/>
    </location>
    <ligand>
        <name>NAD(+)</name>
        <dbReference type="ChEBI" id="CHEBI:57540"/>
    </ligand>
</feature>
<feature type="binding site" evidence="1">
    <location>
        <position position="290"/>
    </location>
    <ligand>
        <name>NAD(+)</name>
        <dbReference type="ChEBI" id="CHEBI:57540"/>
    </ligand>
</feature>
<feature type="binding site" evidence="1">
    <location>
        <position position="314"/>
    </location>
    <ligand>
        <name>NAD(+)</name>
        <dbReference type="ChEBI" id="CHEBI:57540"/>
    </ligand>
</feature>
<feature type="binding site" evidence="1">
    <location>
        <position position="408"/>
    </location>
    <ligand>
        <name>Zn(2+)</name>
        <dbReference type="ChEBI" id="CHEBI:29105"/>
    </ligand>
</feature>
<feature type="binding site" evidence="1">
    <location>
        <position position="411"/>
    </location>
    <ligand>
        <name>Zn(2+)</name>
        <dbReference type="ChEBI" id="CHEBI:29105"/>
    </ligand>
</feature>
<feature type="binding site" evidence="1">
    <location>
        <position position="426"/>
    </location>
    <ligand>
        <name>Zn(2+)</name>
        <dbReference type="ChEBI" id="CHEBI:29105"/>
    </ligand>
</feature>
<feature type="binding site" evidence="1">
    <location>
        <position position="432"/>
    </location>
    <ligand>
        <name>Zn(2+)</name>
        <dbReference type="ChEBI" id="CHEBI:29105"/>
    </ligand>
</feature>
<sequence length="671" mass="73663">MESIEQQLTELRTTLRHHEYLYHVMDAPEIPDAEYDRLMRELRELETKHPELITPDSPTQRVGAAPLAAFSQIRHEVPMLSLDNVFDEESFLAFNKRVQDRLKSNEKVTWCCELKLDGLAVSILYENGVLVSAATRGDGTTGEDITSNVRTIRAIPLKLHGENIPARLEVRGEVFLPQAGFEKINEDARRTGGKVFANPRNAAAGSLRQLDPRITAKRPLTFFCYGVGVLEGGELPDTHLGRLLQFKKWGLPVSDRVTLCESAEEVLAFYHKVEEDRPTLGFDIDGVVIKVNSLEQQEQLGFVARAPRWAVAFKFPAQEQMTFVRDVEFQVGRTGAITPVARLEPVHVAGVLVSNATLHNADEIERLGLRIGDKVVIRRAGDVIPQVVNVVLSERPEDTREVVFPTYCPVCGSDVERVEGEAVARCTGGLICGAQRKESLKHFVSRRAMDVDGMGDKIIDQLVEKEYVHTPADLFKLTAGKLTGLERMGPKSAQNVVNALEKAKETTFARFLYALGIREVGEATAAGLAAYFGTLEALEAASIEELQKVPDVGIVVASHVHNFFAEESNRNVISELLAEGVHWPAPIVINAEEIDSPFAGKTVVLTGSLSQMSRDDAKARLVELGAKVAGSVSKKTDLVIAGEAAGSKLAKAQELGIEVIDEAEMLRLLGS</sequence>
<organism>
    <name type="scientific">Escherichia coli O157:H7 (strain EC4115 / EHEC)</name>
    <dbReference type="NCBI Taxonomy" id="444450"/>
    <lineage>
        <taxon>Bacteria</taxon>
        <taxon>Pseudomonadati</taxon>
        <taxon>Pseudomonadota</taxon>
        <taxon>Gammaproteobacteria</taxon>
        <taxon>Enterobacterales</taxon>
        <taxon>Enterobacteriaceae</taxon>
        <taxon>Escherichia</taxon>
    </lineage>
</organism>
<gene>
    <name evidence="1" type="primary">ligA</name>
    <name type="ordered locus">ECH74115_3642</name>
</gene>
<comment type="function">
    <text evidence="1">DNA ligase that catalyzes the formation of phosphodiester linkages between 5'-phosphoryl and 3'-hydroxyl groups in double-stranded DNA using NAD as a coenzyme and as the energy source for the reaction. It is essential for DNA replication and repair of damaged DNA.</text>
</comment>
<comment type="catalytic activity">
    <reaction evidence="1">
        <text>NAD(+) + (deoxyribonucleotide)n-3'-hydroxyl + 5'-phospho-(deoxyribonucleotide)m = (deoxyribonucleotide)n+m + AMP + beta-nicotinamide D-nucleotide.</text>
        <dbReference type="EC" id="6.5.1.2"/>
    </reaction>
</comment>
<comment type="cofactor">
    <cofactor evidence="1">
        <name>Mg(2+)</name>
        <dbReference type="ChEBI" id="CHEBI:18420"/>
    </cofactor>
    <cofactor evidence="1">
        <name>Mn(2+)</name>
        <dbReference type="ChEBI" id="CHEBI:29035"/>
    </cofactor>
</comment>
<comment type="similarity">
    <text evidence="1">Belongs to the NAD-dependent DNA ligase family. LigA subfamily.</text>
</comment>